<comment type="subcellular location">
    <subcellularLocation>
        <location evidence="5">Membrane</location>
        <topology evidence="5">Multi-pass membrane protein</topology>
    </subcellularLocation>
</comment>
<comment type="alternative products">
    <event type="alternative splicing"/>
    <isoform>
        <id>Q2HJA8-1</id>
        <name>1</name>
        <sequence type="displayed"/>
    </isoform>
    <isoform>
        <id>Q2HJA8-2</id>
        <name>2</name>
        <sequence type="described" ref="VSP_019699"/>
    </isoform>
</comment>
<sequence>MISRHLQNNLMSVDPVSSQAMELSDVTLIEGVGNEVTVVAGVVVLILALVLAWLSTYVADSGSNPLLGTIVSAGDTSVLHLGHVDHLVAGQGTPEPTELPHPSEGNDEKAEEAGEGGGDPTGEPGAGGGVEPSLEHLLDIQGLPKRQAGPGNSSLEAPVRSEDSTCLPSSPSLISVRLKFFNDTEELAVARPEDTVGALKSKYFPGQESQMKLIYQGRLLQDPARTLRSLNITDNCVIHCHRSPPGSAVAGPSSSLAPSSTTEPPNLGVSVGSLMVPVFVVLLGVVWYFRINYRQFFTAPATVSLVGVTVFFSFLVFGMYGR</sequence>
<accession>Q2HJA8</accession>
<proteinExistence type="evidence at transcript level"/>
<gene>
    <name type="primary">TMUB2</name>
</gene>
<keyword id="KW-0025">Alternative splicing</keyword>
<keyword id="KW-0472">Membrane</keyword>
<keyword id="KW-1185">Reference proteome</keyword>
<keyword id="KW-0812">Transmembrane</keyword>
<keyword id="KW-1133">Transmembrane helix</keyword>
<organism>
    <name type="scientific">Bos taurus</name>
    <name type="common">Bovine</name>
    <dbReference type="NCBI Taxonomy" id="9913"/>
    <lineage>
        <taxon>Eukaryota</taxon>
        <taxon>Metazoa</taxon>
        <taxon>Chordata</taxon>
        <taxon>Craniata</taxon>
        <taxon>Vertebrata</taxon>
        <taxon>Euteleostomi</taxon>
        <taxon>Mammalia</taxon>
        <taxon>Eutheria</taxon>
        <taxon>Laurasiatheria</taxon>
        <taxon>Artiodactyla</taxon>
        <taxon>Ruminantia</taxon>
        <taxon>Pecora</taxon>
        <taxon>Bovidae</taxon>
        <taxon>Bovinae</taxon>
        <taxon>Bos</taxon>
    </lineage>
</organism>
<name>TMUB2_BOVIN</name>
<protein>
    <recommendedName>
        <fullName>Transmembrane and ubiquitin-like domain-containing protein 2</fullName>
    </recommendedName>
</protein>
<dbReference type="EMBL" id="BC113228">
    <property type="protein sequence ID" value="AAI13229.1"/>
    <property type="molecule type" value="mRNA"/>
</dbReference>
<dbReference type="EMBL" id="DV881624">
    <property type="status" value="NOT_ANNOTATED_CDS"/>
    <property type="molecule type" value="mRNA"/>
</dbReference>
<dbReference type="RefSeq" id="NP_001039999.1">
    <molecule id="Q2HJA8-2"/>
    <property type="nucleotide sequence ID" value="NM_001046534.1"/>
</dbReference>
<dbReference type="SMR" id="Q2HJA8"/>
<dbReference type="FunCoup" id="Q2HJA8">
    <property type="interactions" value="3217"/>
</dbReference>
<dbReference type="STRING" id="9913.ENSBTAP00000034688"/>
<dbReference type="PaxDb" id="9913-ENSBTAP00000026199"/>
<dbReference type="GeneID" id="614388"/>
<dbReference type="KEGG" id="bta:614388"/>
<dbReference type="CTD" id="79089"/>
<dbReference type="eggNOG" id="ENOG502QU8U">
    <property type="taxonomic scope" value="Eukaryota"/>
</dbReference>
<dbReference type="InParanoid" id="Q2HJA8"/>
<dbReference type="OrthoDB" id="161999at2759"/>
<dbReference type="Proteomes" id="UP000009136">
    <property type="component" value="Unplaced"/>
</dbReference>
<dbReference type="GO" id="GO:0016020">
    <property type="term" value="C:membrane"/>
    <property type="evidence" value="ECO:0007669"/>
    <property type="project" value="UniProtKB-SubCell"/>
</dbReference>
<dbReference type="GO" id="GO:0036503">
    <property type="term" value="P:ERAD pathway"/>
    <property type="evidence" value="ECO:0000318"/>
    <property type="project" value="GO_Central"/>
</dbReference>
<dbReference type="CDD" id="cd17132">
    <property type="entry name" value="Ubl_TMUB2"/>
    <property type="match status" value="1"/>
</dbReference>
<dbReference type="Gene3D" id="3.10.20.90">
    <property type="entry name" value="Phosphatidylinositol 3-kinase Catalytic Subunit, Chain A, domain 1"/>
    <property type="match status" value="1"/>
</dbReference>
<dbReference type="InterPro" id="IPR040352">
    <property type="entry name" value="TMUB1/2"/>
</dbReference>
<dbReference type="InterPro" id="IPR000626">
    <property type="entry name" value="Ubiquitin-like_dom"/>
</dbReference>
<dbReference type="InterPro" id="IPR029071">
    <property type="entry name" value="Ubiquitin-like_domsf"/>
</dbReference>
<dbReference type="PANTHER" id="PTHR14557">
    <property type="entry name" value="PROTEIN C7ORF21"/>
    <property type="match status" value="1"/>
</dbReference>
<dbReference type="PANTHER" id="PTHR14557:SF4">
    <property type="entry name" value="TRANSMEMBRANE AND UBIQUITIN-LIKE DOMAIN-CONTAINING PROTEIN 2"/>
    <property type="match status" value="1"/>
</dbReference>
<dbReference type="Pfam" id="PF00240">
    <property type="entry name" value="ubiquitin"/>
    <property type="match status" value="1"/>
</dbReference>
<dbReference type="SMART" id="SM00213">
    <property type="entry name" value="UBQ"/>
    <property type="match status" value="1"/>
</dbReference>
<dbReference type="SUPFAM" id="SSF54236">
    <property type="entry name" value="Ubiquitin-like"/>
    <property type="match status" value="1"/>
</dbReference>
<dbReference type="PROSITE" id="PS50053">
    <property type="entry name" value="UBIQUITIN_2"/>
    <property type="match status" value="1"/>
</dbReference>
<evidence type="ECO:0000255" key="1"/>
<evidence type="ECO:0000255" key="2">
    <source>
        <dbReference type="PROSITE-ProRule" id="PRU00214"/>
    </source>
</evidence>
<evidence type="ECO:0000256" key="3">
    <source>
        <dbReference type="SAM" id="MobiDB-lite"/>
    </source>
</evidence>
<evidence type="ECO:0000303" key="4">
    <source ref="1"/>
</evidence>
<evidence type="ECO:0000305" key="5"/>
<reference key="1">
    <citation type="submission" date="2006-02" db="EMBL/GenBank/DDBJ databases">
        <authorList>
            <consortium name="NIH - Mammalian Gene Collection (MGC) project"/>
        </authorList>
    </citation>
    <scope>NUCLEOTIDE SEQUENCE [LARGE SCALE MRNA] (ISOFORM 2)</scope>
    <scope>NUCLEOTIDE SEQUENCE [LARGE SCALE MRNA] OF 1-100 (ISOFORM 1)</scope>
    <source>
        <strain>Hereford</strain>
        <tissue>Thalamus</tissue>
        <tissue>Uterus</tissue>
    </source>
</reference>
<feature type="chain" id="PRO_0000245311" description="Transmembrane and ubiquitin-like domain-containing protein 2">
    <location>
        <begin position="1"/>
        <end position="322"/>
    </location>
</feature>
<feature type="transmembrane region" description="Helical" evidence="1">
    <location>
        <begin position="38"/>
        <end position="58"/>
    </location>
</feature>
<feature type="transmembrane region" description="Helical" evidence="1">
    <location>
        <begin position="267"/>
        <end position="287"/>
    </location>
</feature>
<feature type="transmembrane region" description="Helical" evidence="1">
    <location>
        <begin position="296"/>
        <end position="316"/>
    </location>
</feature>
<feature type="domain" description="Ubiquitin-like" evidence="2">
    <location>
        <begin position="174"/>
        <end position="247"/>
    </location>
</feature>
<feature type="region of interest" description="Disordered" evidence="3">
    <location>
        <begin position="88"/>
        <end position="168"/>
    </location>
</feature>
<feature type="compositionally biased region" description="Gly residues" evidence="3">
    <location>
        <begin position="115"/>
        <end position="130"/>
    </location>
</feature>
<feature type="splice variant" id="VSP_019699" description="In isoform 2." evidence="4">
    <location>
        <begin position="1"/>
        <end position="20"/>
    </location>
</feature>